<sequence length="252" mass="27790">MAKNAMLCLLILRVVLALAFATNKKGDEEPENHSTGIFGKVGRVVTVALAMSSRLGGADATRGGGAVYGRDLKSNQLPNNNWMAPPPPMAIRSAKVYDSKHSPAEYLKKFAQDFRRKTGMHSQRHHEETTLEQEKRVAGAGPDPIHHQDTTLEQEKRAVPAGPDPKHHEETTLEQEKRAVPAGPDPKHHEETTLEQEKRAVPAGPDPKHHEETTLEQEKRAVPAGPDPKHHEETTFEQEKRGAPAGPDPIHH</sequence>
<proteinExistence type="evidence at transcript level"/>
<comment type="function">
    <text evidence="5">Mimics host plant CLE extracellular signal peptides that regulate cell fate. May play a role in the differentiation or division of feeding cells (syncytia) induced in plant roots during infection.</text>
</comment>
<comment type="subcellular location">
    <subcellularLocation>
        <location evidence="1">Secreted</location>
    </subcellularLocation>
    <subcellularLocation>
        <location evidence="1">Host cytoplasm</location>
    </subcellularLocation>
    <subcellularLocation>
        <location evidence="1">Host extracellular space</location>
    </subcellularLocation>
    <subcellularLocation>
        <location evidence="1">Secreted</location>
        <location evidence="1">Extracellular space</location>
        <location evidence="1">Apoplast</location>
    </subcellularLocation>
    <text evidence="1">Present in secretory granules within the dorsal esophageal gland secretory cell and in the dorsal gland ampulla (collecting reservoir) at the base of the nematode stylet. Secreted into host root cells via the nematode stylet to transform the recipient cells into enlarged multinucleate feeding cells called giant-cells or syncytia. Secreted to the host apoplasm from its cytoplasm via a plant secretory pathway (By similarity).</text>
</comment>
<comment type="tissue specificity">
    <text evidence="5">Highly expressed exclusively within the dorsal esophageal gland cell during syncytium formation in host plants.</text>
</comment>
<comment type="developmental stage">
    <text evidence="5">Strongly up-regulated during root colonization, from the onset of syncytium formation by parasitic second-stage juveniles (pJ2) through the J3?J4 molts of sedentary life stages that become adult females.</text>
</comment>
<comment type="similarity">
    <text evidence="6">Belongs to the CLV3/ESR signal peptide family.</text>
</comment>
<feature type="signal peptide" evidence="2">
    <location>
        <begin position="1"/>
        <end position="21"/>
    </location>
</feature>
<feature type="chain" id="PRO_5000539260" description="CLAVATA3/ESR (CLE)-related protein 4A-1" evidence="2">
    <location>
        <begin position="22"/>
        <end position="252"/>
    </location>
</feature>
<feature type="repeat" description="A-1">
    <location>
        <begin position="127"/>
        <end position="135"/>
    </location>
</feature>
<feature type="repeat" description="CLE-1">
    <location>
        <begin position="136"/>
        <end position="147"/>
    </location>
</feature>
<feature type="repeat" description="A-2">
    <location>
        <begin position="148"/>
        <end position="156"/>
    </location>
</feature>
<feature type="repeat" description="CLE-2">
    <location>
        <begin position="157"/>
        <end position="168"/>
    </location>
</feature>
<feature type="repeat" description="A-3">
    <location>
        <begin position="169"/>
        <end position="177"/>
    </location>
</feature>
<feature type="repeat" description="CLE-3">
    <location>
        <begin position="178"/>
        <end position="189"/>
    </location>
</feature>
<feature type="repeat" description="A-4">
    <location>
        <begin position="190"/>
        <end position="198"/>
    </location>
</feature>
<feature type="repeat" description="CLE-4">
    <location>
        <begin position="199"/>
        <end position="210"/>
    </location>
</feature>
<feature type="repeat" description="A-5">
    <location>
        <begin position="211"/>
        <end position="219"/>
    </location>
</feature>
<feature type="repeat" description="CLE-5">
    <location>
        <begin position="220"/>
        <end position="231"/>
    </location>
</feature>
<feature type="repeat" description="A-6">
    <location>
        <begin position="232"/>
        <end position="240"/>
    </location>
</feature>
<feature type="repeat" description="CLE-6">
    <location>
        <begin position="241"/>
        <end position="252"/>
    </location>
</feature>
<feature type="region of interest" description="Required for secretion from the host cytoplasm to the host apoplasm" evidence="1">
    <location>
        <begin position="21"/>
        <end position="83"/>
    </location>
</feature>
<feature type="region of interest" description="Disordered" evidence="4">
    <location>
        <begin position="116"/>
        <end position="252"/>
    </location>
</feature>
<feature type="region of interest" description="6 X approximate repeat A">
    <location>
        <begin position="127"/>
        <end position="219"/>
    </location>
</feature>
<feature type="region of interest" description="6 X approximate repeat CLE">
    <location>
        <begin position="136"/>
        <end position="252"/>
    </location>
</feature>
<feature type="compositionally biased region" description="Basic and acidic residues" evidence="4">
    <location>
        <begin position="125"/>
        <end position="137"/>
    </location>
</feature>
<feature type="compositionally biased region" description="Basic and acidic residues" evidence="4">
    <location>
        <begin position="144"/>
        <end position="242"/>
    </location>
</feature>
<feature type="glycosylation site" description="N-linked (GlcNAc...) asparagine" evidence="3">
    <location>
        <position position="32"/>
    </location>
</feature>
<reference key="1">
    <citation type="journal article" date="2009" name="Mol. Plant Microbe Interact.">
        <title>Structural and functional diversity of CLAVATA3/ESR (CLE)-like genes from the potato cyst nematode Globodera rostochiensis.</title>
        <authorList>
            <person name="Lu S.-W."/>
            <person name="Chen S."/>
            <person name="Wang J."/>
            <person name="Yu H."/>
            <person name="Chronis D."/>
            <person name="Mitchum M.G."/>
            <person name="Wang X."/>
        </authorList>
    </citation>
    <scope>NUCLEOTIDE SEQUENCE [GENOMIC DNA / MRNA]</scope>
    <scope>FUNCTION</scope>
    <scope>TISSUE SPECIFICITY</scope>
    <scope>DEVELOPMENTAL STAGE</scope>
</reference>
<accession>D1FNJ9</accession>
<evidence type="ECO:0000250" key="1"/>
<evidence type="ECO:0000255" key="2"/>
<evidence type="ECO:0000255" key="3">
    <source>
        <dbReference type="PROSITE-ProRule" id="PRU00498"/>
    </source>
</evidence>
<evidence type="ECO:0000256" key="4">
    <source>
        <dbReference type="SAM" id="MobiDB-lite"/>
    </source>
</evidence>
<evidence type="ECO:0000269" key="5">
    <source>
    </source>
</evidence>
<evidence type="ECO:0000305" key="6"/>
<protein>
    <recommendedName>
        <fullName>CLAVATA3/ESR (CLE)-related protein 4A-1</fullName>
    </recommendedName>
</protein>
<dbReference type="EMBL" id="EU386831">
    <property type="protein sequence ID" value="ACY70450.1"/>
    <property type="molecule type" value="mRNA"/>
</dbReference>
<dbReference type="EMBL" id="EU386838">
    <property type="protein sequence ID" value="ACY70457.1"/>
    <property type="molecule type" value="Genomic_DNA"/>
</dbReference>
<dbReference type="GlyCosmos" id="D1FNJ9">
    <property type="glycosylation" value="1 site, No reported glycans"/>
</dbReference>
<dbReference type="Proteomes" id="UP000887572">
    <property type="component" value="Unplaced"/>
</dbReference>
<dbReference type="GO" id="GO:0005576">
    <property type="term" value="C:extracellular region"/>
    <property type="evidence" value="ECO:0007669"/>
    <property type="project" value="UniProtKB-SubCell"/>
</dbReference>
<dbReference type="GO" id="GO:0030430">
    <property type="term" value="C:host cell cytoplasm"/>
    <property type="evidence" value="ECO:0007669"/>
    <property type="project" value="UniProtKB-SubCell"/>
</dbReference>
<dbReference type="GO" id="GO:0043655">
    <property type="term" value="C:host extracellular space"/>
    <property type="evidence" value="ECO:0007669"/>
    <property type="project" value="UniProtKB-SubCell"/>
</dbReference>
<dbReference type="GO" id="GO:0033612">
    <property type="term" value="F:receptor serine/threonine kinase binding"/>
    <property type="evidence" value="ECO:0007669"/>
    <property type="project" value="InterPro"/>
</dbReference>
<dbReference type="GO" id="GO:0030154">
    <property type="term" value="P:cell differentiation"/>
    <property type="evidence" value="ECO:0007669"/>
    <property type="project" value="UniProtKB-KW"/>
</dbReference>
<dbReference type="InterPro" id="IPR044962">
    <property type="entry name" value="CLV3/ESR"/>
</dbReference>
<dbReference type="PANTHER" id="PTHR36349">
    <property type="entry name" value="PROTEIN CLAVATA 3"/>
    <property type="match status" value="1"/>
</dbReference>
<dbReference type="PANTHER" id="PTHR36349:SF2">
    <property type="entry name" value="PROTEIN CLAVATA 3"/>
    <property type="match status" value="1"/>
</dbReference>
<gene>
    <name type="primary">CLE-4A-1</name>
</gene>
<name>CL4A1_GLORO</name>
<organism>
    <name type="scientific">Globodera rostochiensis</name>
    <name type="common">Golden nematode worm</name>
    <name type="synonym">Heterodera rostochiensis</name>
    <dbReference type="NCBI Taxonomy" id="31243"/>
    <lineage>
        <taxon>Eukaryota</taxon>
        <taxon>Metazoa</taxon>
        <taxon>Ecdysozoa</taxon>
        <taxon>Nematoda</taxon>
        <taxon>Chromadorea</taxon>
        <taxon>Rhabditida</taxon>
        <taxon>Tylenchina</taxon>
        <taxon>Tylenchomorpha</taxon>
        <taxon>Tylenchoidea</taxon>
        <taxon>Heteroderidae</taxon>
        <taxon>Heteroderinae</taxon>
        <taxon>Globodera</taxon>
    </lineage>
</organism>
<keyword id="KW-0052">Apoplast</keyword>
<keyword id="KW-0221">Differentiation</keyword>
<keyword id="KW-0325">Glycoprotein</keyword>
<keyword id="KW-1035">Host cytoplasm</keyword>
<keyword id="KW-1185">Reference proteome</keyword>
<keyword id="KW-0677">Repeat</keyword>
<keyword id="KW-0964">Secreted</keyword>
<keyword id="KW-0732">Signal</keyword>